<dbReference type="EC" id="2.7.7.56" evidence="1"/>
<dbReference type="EMBL" id="CP000803">
    <property type="protein sequence ID" value="ABU60855.1"/>
    <property type="molecule type" value="Genomic_DNA"/>
</dbReference>
<dbReference type="RefSeq" id="WP_003014543.1">
    <property type="nucleotide sequence ID" value="NC_009749.1"/>
</dbReference>
<dbReference type="SMR" id="A7NA52"/>
<dbReference type="KEGG" id="fta:FTA_0378"/>
<dbReference type="HOGENOM" id="CLU_050858_0_0_6"/>
<dbReference type="GO" id="GO:0000175">
    <property type="term" value="F:3'-5'-RNA exonuclease activity"/>
    <property type="evidence" value="ECO:0007669"/>
    <property type="project" value="UniProtKB-UniRule"/>
</dbReference>
<dbReference type="GO" id="GO:0000049">
    <property type="term" value="F:tRNA binding"/>
    <property type="evidence" value="ECO:0007669"/>
    <property type="project" value="UniProtKB-UniRule"/>
</dbReference>
<dbReference type="GO" id="GO:0009022">
    <property type="term" value="F:tRNA nucleotidyltransferase activity"/>
    <property type="evidence" value="ECO:0007669"/>
    <property type="project" value="UniProtKB-UniRule"/>
</dbReference>
<dbReference type="GO" id="GO:0016075">
    <property type="term" value="P:rRNA catabolic process"/>
    <property type="evidence" value="ECO:0007669"/>
    <property type="project" value="UniProtKB-UniRule"/>
</dbReference>
<dbReference type="GO" id="GO:0006364">
    <property type="term" value="P:rRNA processing"/>
    <property type="evidence" value="ECO:0007669"/>
    <property type="project" value="UniProtKB-KW"/>
</dbReference>
<dbReference type="GO" id="GO:0008033">
    <property type="term" value="P:tRNA processing"/>
    <property type="evidence" value="ECO:0007669"/>
    <property type="project" value="UniProtKB-UniRule"/>
</dbReference>
<dbReference type="CDD" id="cd11362">
    <property type="entry name" value="RNase_PH_bact"/>
    <property type="match status" value="1"/>
</dbReference>
<dbReference type="FunFam" id="3.30.230.70:FF:000003">
    <property type="entry name" value="Ribonuclease PH"/>
    <property type="match status" value="1"/>
</dbReference>
<dbReference type="Gene3D" id="3.30.230.70">
    <property type="entry name" value="GHMP Kinase, N-terminal domain"/>
    <property type="match status" value="1"/>
</dbReference>
<dbReference type="HAMAP" id="MF_00564">
    <property type="entry name" value="RNase_PH"/>
    <property type="match status" value="1"/>
</dbReference>
<dbReference type="InterPro" id="IPR001247">
    <property type="entry name" value="ExoRNase_PH_dom1"/>
</dbReference>
<dbReference type="InterPro" id="IPR015847">
    <property type="entry name" value="ExoRNase_PH_dom2"/>
</dbReference>
<dbReference type="InterPro" id="IPR036345">
    <property type="entry name" value="ExoRNase_PH_dom2_sf"/>
</dbReference>
<dbReference type="InterPro" id="IPR027408">
    <property type="entry name" value="PNPase/RNase_PH_dom_sf"/>
</dbReference>
<dbReference type="InterPro" id="IPR020568">
    <property type="entry name" value="Ribosomal_Su5_D2-typ_SF"/>
</dbReference>
<dbReference type="InterPro" id="IPR050080">
    <property type="entry name" value="RNase_PH"/>
</dbReference>
<dbReference type="InterPro" id="IPR002381">
    <property type="entry name" value="RNase_PH_bac-type"/>
</dbReference>
<dbReference type="InterPro" id="IPR018336">
    <property type="entry name" value="RNase_PH_CS"/>
</dbReference>
<dbReference type="NCBIfam" id="TIGR01966">
    <property type="entry name" value="RNasePH"/>
    <property type="match status" value="1"/>
</dbReference>
<dbReference type="PANTHER" id="PTHR11953">
    <property type="entry name" value="EXOSOME COMPLEX COMPONENT"/>
    <property type="match status" value="1"/>
</dbReference>
<dbReference type="PANTHER" id="PTHR11953:SF0">
    <property type="entry name" value="EXOSOME COMPLEX COMPONENT RRP41"/>
    <property type="match status" value="1"/>
</dbReference>
<dbReference type="Pfam" id="PF01138">
    <property type="entry name" value="RNase_PH"/>
    <property type="match status" value="1"/>
</dbReference>
<dbReference type="Pfam" id="PF03725">
    <property type="entry name" value="RNase_PH_C"/>
    <property type="match status" value="1"/>
</dbReference>
<dbReference type="SUPFAM" id="SSF55666">
    <property type="entry name" value="Ribonuclease PH domain 2-like"/>
    <property type="match status" value="1"/>
</dbReference>
<dbReference type="SUPFAM" id="SSF54211">
    <property type="entry name" value="Ribosomal protein S5 domain 2-like"/>
    <property type="match status" value="1"/>
</dbReference>
<dbReference type="PROSITE" id="PS01277">
    <property type="entry name" value="RIBONUCLEASE_PH"/>
    <property type="match status" value="1"/>
</dbReference>
<name>RNPH_FRATF</name>
<keyword id="KW-0548">Nucleotidyltransferase</keyword>
<keyword id="KW-0694">RNA-binding</keyword>
<keyword id="KW-0698">rRNA processing</keyword>
<keyword id="KW-0808">Transferase</keyword>
<keyword id="KW-0819">tRNA processing</keyword>
<keyword id="KW-0820">tRNA-binding</keyword>
<evidence type="ECO:0000255" key="1">
    <source>
        <dbReference type="HAMAP-Rule" id="MF_00564"/>
    </source>
</evidence>
<gene>
    <name evidence="1" type="primary">rph</name>
    <name type="ordered locus">FTA_0378</name>
</gene>
<comment type="function">
    <text evidence="1">Phosphorolytic 3'-5' exoribonuclease that plays an important role in tRNA 3'-end maturation. Removes nucleotide residues following the 3'-CCA terminus of tRNAs; can also add nucleotides to the ends of RNA molecules by using nucleoside diphosphates as substrates, but this may not be physiologically important. Probably plays a role in initiation of 16S rRNA degradation (leading to ribosome degradation) during starvation.</text>
</comment>
<comment type="catalytic activity">
    <reaction evidence="1">
        <text>tRNA(n+1) + phosphate = tRNA(n) + a ribonucleoside 5'-diphosphate</text>
        <dbReference type="Rhea" id="RHEA:10628"/>
        <dbReference type="Rhea" id="RHEA-COMP:17343"/>
        <dbReference type="Rhea" id="RHEA-COMP:17344"/>
        <dbReference type="ChEBI" id="CHEBI:43474"/>
        <dbReference type="ChEBI" id="CHEBI:57930"/>
        <dbReference type="ChEBI" id="CHEBI:173114"/>
        <dbReference type="EC" id="2.7.7.56"/>
    </reaction>
</comment>
<comment type="subunit">
    <text evidence="1">Homohexameric ring arranged as a trimer of dimers.</text>
</comment>
<comment type="similarity">
    <text evidence="1">Belongs to the RNase PH family.</text>
</comment>
<feature type="chain" id="PRO_1000024807" description="Ribonuclease PH">
    <location>
        <begin position="1"/>
        <end position="235"/>
    </location>
</feature>
<feature type="binding site" evidence="1">
    <location>
        <position position="86"/>
    </location>
    <ligand>
        <name>phosphate</name>
        <dbReference type="ChEBI" id="CHEBI:43474"/>
        <note>substrate</note>
    </ligand>
</feature>
<feature type="binding site" evidence="1">
    <location>
        <begin position="124"/>
        <end position="126"/>
    </location>
    <ligand>
        <name>phosphate</name>
        <dbReference type="ChEBI" id="CHEBI:43474"/>
        <note>substrate</note>
    </ligand>
</feature>
<protein>
    <recommendedName>
        <fullName evidence="1">Ribonuclease PH</fullName>
        <shortName evidence="1">RNase PH</shortName>
        <ecNumber evidence="1">2.7.7.56</ecNumber>
    </recommendedName>
    <alternativeName>
        <fullName evidence="1">tRNA nucleotidyltransferase</fullName>
    </alternativeName>
</protein>
<proteinExistence type="inferred from homology"/>
<reference key="1">
    <citation type="journal article" date="2009" name="PLoS ONE">
        <title>Complete genome sequence of Francisella tularensis subspecies holarctica FTNF002-00.</title>
        <authorList>
            <person name="Barabote R.D."/>
            <person name="Xie G."/>
            <person name="Brettin T.S."/>
            <person name="Hinrichs S.H."/>
            <person name="Fey P.D."/>
            <person name="Jay J.J."/>
            <person name="Engle J.L."/>
            <person name="Godbole S.D."/>
            <person name="Noronha J.M."/>
            <person name="Scheuermann R.H."/>
            <person name="Zhou L.W."/>
            <person name="Lion C."/>
            <person name="Dempsey M.P."/>
        </authorList>
    </citation>
    <scope>NUCLEOTIDE SEQUENCE [LARGE SCALE GENOMIC DNA]</scope>
    <source>
        <strain>FTNF002-00 / FTA</strain>
    </source>
</reference>
<accession>A7NA52</accession>
<sequence>MRPSGRNNDQLRNLKVTHNFTKHAEGSVLIEFGDTKVICTASVVAGVPKFKKDSGEGWLTAEYGMLPRSTHTRMDREAARGKQSGRTQEIQRLIGRALRASVDLTAIGENTIKVDCDVIQADGGTRTASITGASLAIADAIEYMKQNGILDEQANPLLSQVAAISVGIYNNEPVLDLDYDEDSNAETDMNVVMNSNGGIIEIQGTAEGKDFSEEEFAKMLGLAKKGIKEIFATVF</sequence>
<organism>
    <name type="scientific">Francisella tularensis subsp. holarctica (strain FTNF002-00 / FTA)</name>
    <dbReference type="NCBI Taxonomy" id="458234"/>
    <lineage>
        <taxon>Bacteria</taxon>
        <taxon>Pseudomonadati</taxon>
        <taxon>Pseudomonadota</taxon>
        <taxon>Gammaproteobacteria</taxon>
        <taxon>Thiotrichales</taxon>
        <taxon>Francisellaceae</taxon>
        <taxon>Francisella</taxon>
    </lineage>
</organism>